<sequence>MTDVTIKTLAAERQTSVERLVQQFADAGIRKSADDSVSAQEKQTLIDHLNQKNSGPDKLTLQRKTRSTLNIPGTGGKSKSVQIEVRKKRTFVKRDPQEAERLAAEEQAQREAEEQARREAEESAKREAQQKAEREAAEQAKREAAEQAKREAAEKDKVSNQQDDMTKNAQAEKARREQEAAELKRKAEEEARRKLEEEARRVAEEARRMAEENKWTDNAEPTEDSSDYHVTTSQHARQAEDESDREVEGGRGRGRNAKAARPKKGNKHAESKADREEARAAVRGGKGGKRKGSSLQQGFQKPAQAVNRDVVIGETITVGELANKMAVKGSQVIKAMMKLGAMATINQVIDQETAQLVAEEMGHKVILRRENELEEAVMSDRDTGAAAEPRAPVVTIMGHVDHGKTSLLDYIRSTKVASGEAGGITQHIGAYHVETENGMITFLDTPGHAAFTSMRARGAQATDIVVLVVAADDGVMPQTIEAIQHAKAAGVPVVVAVNKIDKPEADPDRVKNELSQYGILPEEWGGESQFVHVSAKAGTGIDELLDAILLQAEVLELKAVRKGMASGAVIESFLDKGRGPVATVLVREGTLHKGDIVLCGFEYGRVRAMRNELGQEVLEAGPSIPVEILGLSGVPAAGDEVTVVRDEKKAREVALYRQGKFREVKLARQQKSKLENMFANMTEGEVHEVNIVLKADVQGSVEAISDSLLKLSTDEVKVKIIGSGVGGITETDATLAAASNAILVGFNVRADASARKVIEAESLDLRYYSVIYNLIDEVKAAMSGMLSPELKQQIIGLAEVRDVFKSPKFGAIAGCMVTEGVVKRHNPIRVLRDNVVIYEGELESLRRFKDDVNEVRNGMECGIGVKNYNDVRTGDVIEVFEIIEIQRTIA</sequence>
<accession>Q1R6H0</accession>
<dbReference type="EMBL" id="CP000243">
    <property type="protein sequence ID" value="ABE09044.1"/>
    <property type="molecule type" value="Genomic_DNA"/>
</dbReference>
<dbReference type="RefSeq" id="WP_000133040.1">
    <property type="nucleotide sequence ID" value="NZ_CP064825.1"/>
</dbReference>
<dbReference type="SMR" id="Q1R6H0"/>
<dbReference type="KEGG" id="eci:UTI89_C3598"/>
<dbReference type="HOGENOM" id="CLU_006301_6_3_6"/>
<dbReference type="Proteomes" id="UP000001952">
    <property type="component" value="Chromosome"/>
</dbReference>
<dbReference type="GO" id="GO:0005829">
    <property type="term" value="C:cytosol"/>
    <property type="evidence" value="ECO:0007669"/>
    <property type="project" value="TreeGrafter"/>
</dbReference>
<dbReference type="GO" id="GO:0005525">
    <property type="term" value="F:GTP binding"/>
    <property type="evidence" value="ECO:0007669"/>
    <property type="project" value="UniProtKB-KW"/>
</dbReference>
<dbReference type="GO" id="GO:0003924">
    <property type="term" value="F:GTPase activity"/>
    <property type="evidence" value="ECO:0007669"/>
    <property type="project" value="UniProtKB-UniRule"/>
</dbReference>
<dbReference type="GO" id="GO:0097216">
    <property type="term" value="F:guanosine tetraphosphate binding"/>
    <property type="evidence" value="ECO:0007669"/>
    <property type="project" value="UniProtKB-ARBA"/>
</dbReference>
<dbReference type="GO" id="GO:0003743">
    <property type="term" value="F:translation initiation factor activity"/>
    <property type="evidence" value="ECO:0007669"/>
    <property type="project" value="UniProtKB-UniRule"/>
</dbReference>
<dbReference type="CDD" id="cd01887">
    <property type="entry name" value="IF2_eIF5B"/>
    <property type="match status" value="1"/>
</dbReference>
<dbReference type="CDD" id="cd03702">
    <property type="entry name" value="IF2_mtIF2_II"/>
    <property type="match status" value="1"/>
</dbReference>
<dbReference type="CDD" id="cd03692">
    <property type="entry name" value="mtIF2_IVc"/>
    <property type="match status" value="1"/>
</dbReference>
<dbReference type="FunFam" id="2.40.30.10:FF:000007">
    <property type="entry name" value="Translation initiation factor IF-2"/>
    <property type="match status" value="1"/>
</dbReference>
<dbReference type="FunFam" id="2.40.30.10:FF:000008">
    <property type="entry name" value="Translation initiation factor IF-2"/>
    <property type="match status" value="1"/>
</dbReference>
<dbReference type="FunFam" id="3.30.56.50:FF:000001">
    <property type="entry name" value="Translation initiation factor IF-2"/>
    <property type="match status" value="1"/>
</dbReference>
<dbReference type="FunFam" id="3.40.50.10050:FF:000001">
    <property type="entry name" value="Translation initiation factor IF-2"/>
    <property type="match status" value="1"/>
</dbReference>
<dbReference type="FunFam" id="3.40.50.300:FF:000019">
    <property type="entry name" value="Translation initiation factor IF-2"/>
    <property type="match status" value="1"/>
</dbReference>
<dbReference type="Gene3D" id="3.40.50.300">
    <property type="entry name" value="P-loop containing nucleotide triphosphate hydrolases"/>
    <property type="match status" value="1"/>
</dbReference>
<dbReference type="Gene3D" id="3.30.56.50">
    <property type="entry name" value="Putative DNA-binding domain, N-terminal subdomain of bacterial translation initiation factor IF2"/>
    <property type="match status" value="1"/>
</dbReference>
<dbReference type="Gene3D" id="2.40.30.10">
    <property type="entry name" value="Translation factors"/>
    <property type="match status" value="2"/>
</dbReference>
<dbReference type="Gene3D" id="3.40.50.10050">
    <property type="entry name" value="Translation initiation factor IF- 2, domain 3"/>
    <property type="match status" value="1"/>
</dbReference>
<dbReference type="HAMAP" id="MF_00100_B">
    <property type="entry name" value="IF_2_B"/>
    <property type="match status" value="1"/>
</dbReference>
<dbReference type="InterPro" id="IPR009061">
    <property type="entry name" value="DNA-bd_dom_put_sf"/>
</dbReference>
<dbReference type="InterPro" id="IPR053905">
    <property type="entry name" value="EF-G-like_DII"/>
</dbReference>
<dbReference type="InterPro" id="IPR004161">
    <property type="entry name" value="EFTu-like_2"/>
</dbReference>
<dbReference type="InterPro" id="IPR013575">
    <property type="entry name" value="IF2_assoc_dom_bac"/>
</dbReference>
<dbReference type="InterPro" id="IPR044145">
    <property type="entry name" value="IF2_II"/>
</dbReference>
<dbReference type="InterPro" id="IPR006847">
    <property type="entry name" value="IF2_N"/>
</dbReference>
<dbReference type="InterPro" id="IPR027417">
    <property type="entry name" value="P-loop_NTPase"/>
</dbReference>
<dbReference type="InterPro" id="IPR005225">
    <property type="entry name" value="Small_GTP-bd"/>
</dbReference>
<dbReference type="InterPro" id="IPR000795">
    <property type="entry name" value="T_Tr_GTP-bd_dom"/>
</dbReference>
<dbReference type="InterPro" id="IPR000178">
    <property type="entry name" value="TF_IF2_bacterial-like"/>
</dbReference>
<dbReference type="InterPro" id="IPR015760">
    <property type="entry name" value="TIF_IF2"/>
</dbReference>
<dbReference type="InterPro" id="IPR023115">
    <property type="entry name" value="TIF_IF2_dom3"/>
</dbReference>
<dbReference type="InterPro" id="IPR036925">
    <property type="entry name" value="TIF_IF2_dom3_sf"/>
</dbReference>
<dbReference type="InterPro" id="IPR009000">
    <property type="entry name" value="Transl_B-barrel_sf"/>
</dbReference>
<dbReference type="NCBIfam" id="TIGR00487">
    <property type="entry name" value="IF-2"/>
    <property type="match status" value="1"/>
</dbReference>
<dbReference type="NCBIfam" id="TIGR00231">
    <property type="entry name" value="small_GTP"/>
    <property type="match status" value="1"/>
</dbReference>
<dbReference type="PANTHER" id="PTHR43381:SF5">
    <property type="entry name" value="TR-TYPE G DOMAIN-CONTAINING PROTEIN"/>
    <property type="match status" value="1"/>
</dbReference>
<dbReference type="PANTHER" id="PTHR43381">
    <property type="entry name" value="TRANSLATION INITIATION FACTOR IF-2-RELATED"/>
    <property type="match status" value="1"/>
</dbReference>
<dbReference type="Pfam" id="PF22042">
    <property type="entry name" value="EF-G_D2"/>
    <property type="match status" value="1"/>
</dbReference>
<dbReference type="Pfam" id="PF00009">
    <property type="entry name" value="GTP_EFTU"/>
    <property type="match status" value="1"/>
</dbReference>
<dbReference type="Pfam" id="PF03144">
    <property type="entry name" value="GTP_EFTU_D2"/>
    <property type="match status" value="1"/>
</dbReference>
<dbReference type="Pfam" id="PF11987">
    <property type="entry name" value="IF-2"/>
    <property type="match status" value="1"/>
</dbReference>
<dbReference type="Pfam" id="PF08364">
    <property type="entry name" value="IF2_assoc"/>
    <property type="match status" value="1"/>
</dbReference>
<dbReference type="Pfam" id="PF04760">
    <property type="entry name" value="IF2_N"/>
    <property type="match status" value="2"/>
</dbReference>
<dbReference type="SUPFAM" id="SSF52156">
    <property type="entry name" value="Initiation factor IF2/eIF5b, domain 3"/>
    <property type="match status" value="1"/>
</dbReference>
<dbReference type="SUPFAM" id="SSF52540">
    <property type="entry name" value="P-loop containing nucleoside triphosphate hydrolases"/>
    <property type="match status" value="1"/>
</dbReference>
<dbReference type="SUPFAM" id="SSF46955">
    <property type="entry name" value="Putative DNA-binding domain"/>
    <property type="match status" value="1"/>
</dbReference>
<dbReference type="SUPFAM" id="SSF50447">
    <property type="entry name" value="Translation proteins"/>
    <property type="match status" value="2"/>
</dbReference>
<dbReference type="PROSITE" id="PS51722">
    <property type="entry name" value="G_TR_2"/>
    <property type="match status" value="1"/>
</dbReference>
<dbReference type="PROSITE" id="PS01176">
    <property type="entry name" value="IF2"/>
    <property type="match status" value="1"/>
</dbReference>
<evidence type="ECO:0000250" key="1"/>
<evidence type="ECO:0000255" key="2">
    <source>
        <dbReference type="HAMAP-Rule" id="MF_00100"/>
    </source>
</evidence>
<evidence type="ECO:0000256" key="3">
    <source>
        <dbReference type="SAM" id="MobiDB-lite"/>
    </source>
</evidence>
<keyword id="KW-0007">Acetylation</keyword>
<keyword id="KW-0963">Cytoplasm</keyword>
<keyword id="KW-0342">GTP-binding</keyword>
<keyword id="KW-0396">Initiation factor</keyword>
<keyword id="KW-0547">Nucleotide-binding</keyword>
<keyword id="KW-0648">Protein biosynthesis</keyword>
<protein>
    <recommendedName>
        <fullName evidence="2">Translation initiation factor IF-2</fullName>
    </recommendedName>
</protein>
<proteinExistence type="inferred from homology"/>
<gene>
    <name evidence="2" type="primary">infB</name>
    <name type="ordered locus">UTI89_C3598</name>
</gene>
<organism>
    <name type="scientific">Escherichia coli (strain UTI89 / UPEC)</name>
    <dbReference type="NCBI Taxonomy" id="364106"/>
    <lineage>
        <taxon>Bacteria</taxon>
        <taxon>Pseudomonadati</taxon>
        <taxon>Pseudomonadota</taxon>
        <taxon>Gammaproteobacteria</taxon>
        <taxon>Enterobacterales</taxon>
        <taxon>Enterobacteriaceae</taxon>
        <taxon>Escherichia</taxon>
    </lineage>
</organism>
<name>IF2_ECOUT</name>
<reference key="1">
    <citation type="journal article" date="2006" name="Proc. Natl. Acad. Sci. U.S.A.">
        <title>Identification of genes subject to positive selection in uropathogenic strains of Escherichia coli: a comparative genomics approach.</title>
        <authorList>
            <person name="Chen S.L."/>
            <person name="Hung C.-S."/>
            <person name="Xu J."/>
            <person name="Reigstad C.S."/>
            <person name="Magrini V."/>
            <person name="Sabo A."/>
            <person name="Blasiar D."/>
            <person name="Bieri T."/>
            <person name="Meyer R.R."/>
            <person name="Ozersky P."/>
            <person name="Armstrong J.R."/>
            <person name="Fulton R.S."/>
            <person name="Latreille J.P."/>
            <person name="Spieth J."/>
            <person name="Hooton T.M."/>
            <person name="Mardis E.R."/>
            <person name="Hultgren S.J."/>
            <person name="Gordon J.I."/>
        </authorList>
    </citation>
    <scope>NUCLEOTIDE SEQUENCE [LARGE SCALE GENOMIC DNA]</scope>
    <source>
        <strain>UTI89 / UPEC</strain>
    </source>
</reference>
<comment type="function">
    <text evidence="2">One of the essential components for the initiation of protein synthesis. Protects formylmethionyl-tRNA from spontaneous hydrolysis and promotes its binding to the 30S ribosomal subunits. Also involved in the hydrolysis of GTP during the formation of the 70S ribosomal complex.</text>
</comment>
<comment type="subcellular location">
    <subcellularLocation>
        <location evidence="2">Cytoplasm</location>
    </subcellularLocation>
</comment>
<comment type="similarity">
    <text evidence="2">Belongs to the TRAFAC class translation factor GTPase superfamily. Classic translation factor GTPase family. IF-2 subfamily.</text>
</comment>
<feature type="chain" id="PRO_1000008240" description="Translation initiation factor IF-2">
    <location>
        <begin position="1"/>
        <end position="890"/>
    </location>
</feature>
<feature type="domain" description="tr-type G">
    <location>
        <begin position="389"/>
        <end position="558"/>
    </location>
</feature>
<feature type="region of interest" description="Disordered" evidence="3">
    <location>
        <begin position="45"/>
        <end position="304"/>
    </location>
</feature>
<feature type="region of interest" description="G1" evidence="1">
    <location>
        <begin position="398"/>
        <end position="405"/>
    </location>
</feature>
<feature type="region of interest" description="G2" evidence="1">
    <location>
        <begin position="423"/>
        <end position="427"/>
    </location>
</feature>
<feature type="region of interest" description="G3" evidence="1">
    <location>
        <begin position="444"/>
        <end position="447"/>
    </location>
</feature>
<feature type="region of interest" description="G4" evidence="1">
    <location>
        <begin position="498"/>
        <end position="501"/>
    </location>
</feature>
<feature type="region of interest" description="G5" evidence="1">
    <location>
        <begin position="534"/>
        <end position="536"/>
    </location>
</feature>
<feature type="compositionally biased region" description="Polar residues" evidence="3">
    <location>
        <begin position="67"/>
        <end position="81"/>
    </location>
</feature>
<feature type="compositionally biased region" description="Basic and acidic residues" evidence="3">
    <location>
        <begin position="92"/>
        <end position="217"/>
    </location>
</feature>
<feature type="compositionally biased region" description="Basic residues" evidence="3">
    <location>
        <begin position="252"/>
        <end position="266"/>
    </location>
</feature>
<feature type="compositionally biased region" description="Basic and acidic residues" evidence="3">
    <location>
        <begin position="267"/>
        <end position="280"/>
    </location>
</feature>
<feature type="binding site" evidence="2">
    <location>
        <begin position="398"/>
        <end position="405"/>
    </location>
    <ligand>
        <name>GTP</name>
        <dbReference type="ChEBI" id="CHEBI:37565"/>
    </ligand>
</feature>
<feature type="binding site" evidence="2">
    <location>
        <begin position="444"/>
        <end position="448"/>
    </location>
    <ligand>
        <name>GTP</name>
        <dbReference type="ChEBI" id="CHEBI:37565"/>
    </ligand>
</feature>
<feature type="binding site" evidence="2">
    <location>
        <begin position="498"/>
        <end position="501"/>
    </location>
    <ligand>
        <name>GTP</name>
        <dbReference type="ChEBI" id="CHEBI:37565"/>
    </ligand>
</feature>
<feature type="modified residue" description="N6-acetyllysine" evidence="1">
    <location>
        <position position="808"/>
    </location>
</feature>